<comment type="function">
    <text evidence="1">One of several proteins that assist in the late maturation steps of the functional core of the 30S ribosomal subunit. Associates with free 30S ribosomal subunits (but not with 30S subunits that are part of 70S ribosomes or polysomes). Required for efficient processing of 16S rRNA. May interact with the 5'-terminal helix region of 16S rRNA.</text>
</comment>
<comment type="subunit">
    <text evidence="1">Monomer. Binds 30S ribosomal subunits, but not 50S ribosomal subunits or 70S ribosomes.</text>
</comment>
<comment type="subcellular location">
    <subcellularLocation>
        <location evidence="1">Cytoplasm</location>
    </subcellularLocation>
</comment>
<comment type="similarity">
    <text evidence="1">Belongs to the RbfA family.</text>
</comment>
<feature type="chain" id="PRO_0000102701" description="Ribosome-binding factor A">
    <location>
        <begin position="1"/>
        <end position="123"/>
    </location>
</feature>
<accession>Q9JYY2</accession>
<proteinExistence type="inferred from homology"/>
<protein>
    <recommendedName>
        <fullName evidence="1">Ribosome-binding factor A</fullName>
    </recommendedName>
</protein>
<organism>
    <name type="scientific">Neisseria meningitidis serogroup B (strain ATCC BAA-335 / MC58)</name>
    <dbReference type="NCBI Taxonomy" id="122586"/>
    <lineage>
        <taxon>Bacteria</taxon>
        <taxon>Pseudomonadati</taxon>
        <taxon>Pseudomonadota</taxon>
        <taxon>Betaproteobacteria</taxon>
        <taxon>Neisseriales</taxon>
        <taxon>Neisseriaceae</taxon>
        <taxon>Neisseria</taxon>
    </lineage>
</organism>
<sequence length="123" mass="14334">MRKPQRGYARQDRVKEQIMRELAELVRTGLKDPRAGFITVNEVEVTRDYSHATVFYTILNQDAREITEEVLEHARGHLRSELAKRIKLFKTPELHFKYDESLERGLNLSALIDQVAAEKPVED</sequence>
<name>RBFA_NEIMB</name>
<dbReference type="EMBL" id="AE002098">
    <property type="protein sequence ID" value="AAF41747.1"/>
    <property type="molecule type" value="Genomic_DNA"/>
</dbReference>
<dbReference type="PIR" id="B81091">
    <property type="entry name" value="B81091"/>
</dbReference>
<dbReference type="RefSeq" id="NP_274391.1">
    <property type="nucleotide sequence ID" value="NC_003112.2"/>
</dbReference>
<dbReference type="RefSeq" id="WP_002220822.1">
    <property type="nucleotide sequence ID" value="NC_003112.2"/>
</dbReference>
<dbReference type="SMR" id="Q9JYY2"/>
<dbReference type="FunCoup" id="Q9JYY2">
    <property type="interactions" value="430"/>
</dbReference>
<dbReference type="STRING" id="122586.NMB1373"/>
<dbReference type="PaxDb" id="122586-NMB1373"/>
<dbReference type="KEGG" id="nme:NMB1373"/>
<dbReference type="PATRIC" id="fig|122586.8.peg.1721"/>
<dbReference type="HOGENOM" id="CLU_089475_5_0_4"/>
<dbReference type="InParanoid" id="Q9JYY2"/>
<dbReference type="OrthoDB" id="307788at2"/>
<dbReference type="Proteomes" id="UP000000425">
    <property type="component" value="Chromosome"/>
</dbReference>
<dbReference type="GO" id="GO:0005829">
    <property type="term" value="C:cytosol"/>
    <property type="evidence" value="ECO:0000318"/>
    <property type="project" value="GO_Central"/>
</dbReference>
<dbReference type="GO" id="GO:0043024">
    <property type="term" value="F:ribosomal small subunit binding"/>
    <property type="evidence" value="ECO:0000318"/>
    <property type="project" value="GO_Central"/>
</dbReference>
<dbReference type="GO" id="GO:0030490">
    <property type="term" value="P:maturation of SSU-rRNA"/>
    <property type="evidence" value="ECO:0007669"/>
    <property type="project" value="UniProtKB-UniRule"/>
</dbReference>
<dbReference type="GO" id="GO:0042254">
    <property type="term" value="P:ribosome biogenesis"/>
    <property type="evidence" value="ECO:0000318"/>
    <property type="project" value="GO_Central"/>
</dbReference>
<dbReference type="Gene3D" id="3.30.300.20">
    <property type="match status" value="1"/>
</dbReference>
<dbReference type="HAMAP" id="MF_00003">
    <property type="entry name" value="RbfA"/>
    <property type="match status" value="1"/>
</dbReference>
<dbReference type="InterPro" id="IPR015946">
    <property type="entry name" value="KH_dom-like_a/b"/>
</dbReference>
<dbReference type="InterPro" id="IPR000238">
    <property type="entry name" value="RbfA"/>
</dbReference>
<dbReference type="InterPro" id="IPR023799">
    <property type="entry name" value="RbfA_dom_sf"/>
</dbReference>
<dbReference type="InterPro" id="IPR020053">
    <property type="entry name" value="Ribosome-bd_factorA_CS"/>
</dbReference>
<dbReference type="NCBIfam" id="TIGR00082">
    <property type="entry name" value="rbfA"/>
    <property type="match status" value="1"/>
</dbReference>
<dbReference type="PANTHER" id="PTHR33515">
    <property type="entry name" value="RIBOSOME-BINDING FACTOR A, CHLOROPLASTIC-RELATED"/>
    <property type="match status" value="1"/>
</dbReference>
<dbReference type="PANTHER" id="PTHR33515:SF1">
    <property type="entry name" value="RIBOSOME-BINDING FACTOR A, CHLOROPLASTIC-RELATED"/>
    <property type="match status" value="1"/>
</dbReference>
<dbReference type="Pfam" id="PF02033">
    <property type="entry name" value="RBFA"/>
    <property type="match status" value="1"/>
</dbReference>
<dbReference type="SUPFAM" id="SSF89919">
    <property type="entry name" value="Ribosome-binding factor A, RbfA"/>
    <property type="match status" value="1"/>
</dbReference>
<dbReference type="PROSITE" id="PS01319">
    <property type="entry name" value="RBFA"/>
    <property type="match status" value="1"/>
</dbReference>
<gene>
    <name evidence="1" type="primary">rbfA</name>
    <name type="ordered locus">NMB1373</name>
</gene>
<keyword id="KW-0963">Cytoplasm</keyword>
<keyword id="KW-1185">Reference proteome</keyword>
<keyword id="KW-0690">Ribosome biogenesis</keyword>
<evidence type="ECO:0000255" key="1">
    <source>
        <dbReference type="HAMAP-Rule" id="MF_00003"/>
    </source>
</evidence>
<reference key="1">
    <citation type="journal article" date="2000" name="Science">
        <title>Complete genome sequence of Neisseria meningitidis serogroup B strain MC58.</title>
        <authorList>
            <person name="Tettelin H."/>
            <person name="Saunders N.J."/>
            <person name="Heidelberg J.F."/>
            <person name="Jeffries A.C."/>
            <person name="Nelson K.E."/>
            <person name="Eisen J.A."/>
            <person name="Ketchum K.A."/>
            <person name="Hood D.W."/>
            <person name="Peden J.F."/>
            <person name="Dodson R.J."/>
            <person name="Nelson W.C."/>
            <person name="Gwinn M.L."/>
            <person name="DeBoy R.T."/>
            <person name="Peterson J.D."/>
            <person name="Hickey E.K."/>
            <person name="Haft D.H."/>
            <person name="Salzberg S.L."/>
            <person name="White O."/>
            <person name="Fleischmann R.D."/>
            <person name="Dougherty B.A."/>
            <person name="Mason T.M."/>
            <person name="Ciecko A."/>
            <person name="Parksey D.S."/>
            <person name="Blair E."/>
            <person name="Cittone H."/>
            <person name="Clark E.B."/>
            <person name="Cotton M.D."/>
            <person name="Utterback T.R."/>
            <person name="Khouri H.M."/>
            <person name="Qin H."/>
            <person name="Vamathevan J.J."/>
            <person name="Gill J."/>
            <person name="Scarlato V."/>
            <person name="Masignani V."/>
            <person name="Pizza M."/>
            <person name="Grandi G."/>
            <person name="Sun L."/>
            <person name="Smith H.O."/>
            <person name="Fraser C.M."/>
            <person name="Moxon E.R."/>
            <person name="Rappuoli R."/>
            <person name="Venter J.C."/>
        </authorList>
    </citation>
    <scope>NUCLEOTIDE SEQUENCE [LARGE SCALE GENOMIC DNA]</scope>
    <source>
        <strain>ATCC BAA-335 / MC58</strain>
    </source>
</reference>